<gene>
    <name type="primary">mgl-1</name>
    <name type="ORF">ZC506.4</name>
</gene>
<organism>
    <name type="scientific">Caenorhabditis elegans</name>
    <dbReference type="NCBI Taxonomy" id="6239"/>
    <lineage>
        <taxon>Eukaryota</taxon>
        <taxon>Metazoa</taxon>
        <taxon>Ecdysozoa</taxon>
        <taxon>Nematoda</taxon>
        <taxon>Chromadorea</taxon>
        <taxon>Rhabditida</taxon>
        <taxon>Rhabditina</taxon>
        <taxon>Rhabditomorpha</taxon>
        <taxon>Rhabditoidea</taxon>
        <taxon>Rhabditidae</taxon>
        <taxon>Peloderinae</taxon>
        <taxon>Caenorhabditis</taxon>
    </lineage>
</organism>
<protein>
    <recommendedName>
        <fullName>Probable metabotropic glutamate receptor mgl-1</fullName>
    </recommendedName>
</protein>
<keyword id="KW-1003">Cell membrane</keyword>
<keyword id="KW-0297">G-protein coupled receptor</keyword>
<keyword id="KW-0325">Glycoprotein</keyword>
<keyword id="KW-0472">Membrane</keyword>
<keyword id="KW-0675">Receptor</keyword>
<keyword id="KW-1185">Reference proteome</keyword>
<keyword id="KW-0807">Transducer</keyword>
<keyword id="KW-0812">Transmembrane</keyword>
<keyword id="KW-1133">Transmembrane helix</keyword>
<sequence length="999" mass="113276">MDKKWSLEQRWLHLLNQQFLDCLNHLFNHYRRLSTFQKPPSIIRHMFSVLALAIQILANVNVVAQTTEAVDLAPPPKVRQIRIPGDILIGGVFPVHSKSLNGDEPCGEIAETRGVHRVEAMLYALDQINSQNDFLRGYKLGALILDSCSNPAYALNQSLDFVRDMIGSSEASDYVCLDGSDPNLKKQSQKKNVAAVVGGSYSSVSVQLANLLRLFRIAQVSPASTNADLSDKNRFEYFARTVPSDDYQAMAMVEIAVKFKWSYVSLVYSADEYGELGADAFKKEARKKGICIALEERIQNKKESFTESINNLVQKLQPEKNVGATVVVLFVGTEYIPDILRYTAERMKLTSGAKKRIIWLASESWDRNNDKYTAGDNRLAAQGAIVLMLASQKVPSFEEYFMSLHPGTEAFERNKWLRELWQVKYKCEFDTPPGSTASRCEDIKQSTEGFNADDKVQFVIDAVYAIAHGLQSMKQAICPDDAIENHWISRYSKQPEICHAMQNIDGSDFYQNYLLKVNFTGKTISIFSSFRLSPFSDIVGKRFRFSPQGDGPASYTILTYKPKSMDKKRRMTDDESSPSDYVEIGHWSENNLTIYEKNLWWDPDHTPVSVCSLPCKIGFRKQLIKDEQCCWACSKCEDYEYLINETHCVGCEQGWWPTKDRKGCFDLSLSQLKYMRWRSMYSLVPTILAVFGIIATLFVIVVYVIYNETPVVKASGRELSYILLISMIMCYCMTFVLLSKPSAIVCAIKRTGIGFAFSCLYSAMFVKTNRIFRIFSTRSAQRPRFISPISQVVMTAMLAGVQLIGSLIWLSVVPPGWRHHYPTRDQVVLTCNVPDHHFLYSLAYDGFLIVLCTTYAVKTRKVPENFNETKFIGFSMYTTCVVWLSWIFFFFGTGSDFQIQTSSLCISISMSANVALACIFSPKLWIILFEKHKNVRKQEGESMLNKSSRSLGNCSSRLCANSIDEPNQYTALLTDSTRRRSSRKTSQPTSTSSAHDTFL</sequence>
<name>GRM1_CAEEL</name>
<feature type="chain" id="PRO_0000206893" description="Probable metabotropic glutamate receptor mgl-1">
    <location>
        <begin position="1"/>
        <end position="999"/>
    </location>
</feature>
<feature type="transmembrane region" description="Helical" evidence="2">
    <location>
        <begin position="682"/>
        <end position="704"/>
    </location>
</feature>
<feature type="transmembrane region" description="Helical" evidence="2">
    <location>
        <begin position="719"/>
        <end position="739"/>
    </location>
</feature>
<feature type="transmembrane region" description="Helical" evidence="2">
    <location>
        <begin position="751"/>
        <end position="769"/>
    </location>
</feature>
<feature type="transmembrane region" description="Helical" evidence="2">
    <location>
        <begin position="792"/>
        <end position="812"/>
    </location>
</feature>
<feature type="transmembrane region" description="Helical" evidence="2">
    <location>
        <begin position="836"/>
        <end position="857"/>
    </location>
</feature>
<feature type="transmembrane region" description="Helical" evidence="2">
    <location>
        <begin position="871"/>
        <end position="893"/>
    </location>
</feature>
<feature type="transmembrane region" description="Helical" evidence="2">
    <location>
        <begin position="904"/>
        <end position="929"/>
    </location>
</feature>
<feature type="region of interest" description="Disordered" evidence="3">
    <location>
        <begin position="975"/>
        <end position="999"/>
    </location>
</feature>
<feature type="compositionally biased region" description="Low complexity" evidence="3">
    <location>
        <begin position="984"/>
        <end position="993"/>
    </location>
</feature>
<feature type="binding site" evidence="1">
    <location>
        <position position="202"/>
    </location>
    <ligand>
        <name>L-glutamate</name>
        <dbReference type="ChEBI" id="CHEBI:29985"/>
    </ligand>
</feature>
<feature type="binding site" evidence="1">
    <location>
        <begin position="223"/>
        <end position="225"/>
    </location>
    <ligand>
        <name>L-glutamate</name>
        <dbReference type="ChEBI" id="CHEBI:29985"/>
    </ligand>
</feature>
<feature type="binding site" evidence="1">
    <location>
        <position position="273"/>
    </location>
    <ligand>
        <name>L-glutamate</name>
        <dbReference type="ChEBI" id="CHEBI:29985"/>
    </ligand>
</feature>
<feature type="binding site" evidence="1">
    <location>
        <position position="363"/>
    </location>
    <ligand>
        <name>L-glutamate</name>
        <dbReference type="ChEBI" id="CHEBI:29985"/>
    </ligand>
</feature>
<feature type="binding site" evidence="1">
    <location>
        <position position="455"/>
    </location>
    <ligand>
        <name>L-glutamate</name>
        <dbReference type="ChEBI" id="CHEBI:29985"/>
    </ligand>
</feature>
<feature type="glycosylation site" description="N-linked (GlcNAc...) asparagine" evidence="2">
    <location>
        <position position="518"/>
    </location>
</feature>
<proteinExistence type="inferred from homology"/>
<accession>Q09630</accession>
<reference key="1">
    <citation type="journal article" date="1998" name="Science">
        <title>Genome sequence of the nematode C. elegans: a platform for investigating biology.</title>
        <authorList>
            <consortium name="The C. elegans sequencing consortium"/>
        </authorList>
    </citation>
    <scope>NUCLEOTIDE SEQUENCE [LARGE SCALE GENOMIC DNA]</scope>
    <source>
        <strain>Bristol N2</strain>
    </source>
</reference>
<comment type="function">
    <text evidence="1">G-protein coupled receptor for glutamate. Ligand binding causes a conformation change that triggers signaling via guanine nucleotide-binding proteins (G proteins) and modulates the activity of down-stream effectors (By similarity).</text>
</comment>
<comment type="subcellular location">
    <subcellularLocation>
        <location evidence="1">Cell membrane</location>
        <topology evidence="1">Multi-pass membrane protein</topology>
    </subcellularLocation>
</comment>
<comment type="similarity">
    <text evidence="4">Belongs to the G-protein coupled receptor 3 family.</text>
</comment>
<evidence type="ECO:0000250" key="1"/>
<evidence type="ECO:0000255" key="2"/>
<evidence type="ECO:0000256" key="3">
    <source>
        <dbReference type="SAM" id="MobiDB-lite"/>
    </source>
</evidence>
<evidence type="ECO:0000305" key="4"/>
<dbReference type="EMBL" id="Z47073">
    <property type="protein sequence ID" value="CAA87374.1"/>
    <property type="molecule type" value="Genomic_DNA"/>
</dbReference>
<dbReference type="PIR" id="T27628">
    <property type="entry name" value="T27628"/>
</dbReference>
<dbReference type="RefSeq" id="NP_509674.2">
    <property type="nucleotide sequence ID" value="NM_077273.2"/>
</dbReference>
<dbReference type="SMR" id="Q09630"/>
<dbReference type="BioGRID" id="56204">
    <property type="interactions" value="3"/>
</dbReference>
<dbReference type="FunCoup" id="Q09630">
    <property type="interactions" value="750"/>
</dbReference>
<dbReference type="STRING" id="6239.ZC506.4c.1"/>
<dbReference type="GlyCosmos" id="Q09630">
    <property type="glycosylation" value="1 site, No reported glycans"/>
</dbReference>
<dbReference type="PaxDb" id="6239-ZC506.4a"/>
<dbReference type="EnsemblMetazoa" id="ZC506.4a.1">
    <property type="protein sequence ID" value="ZC506.4a.1"/>
    <property type="gene ID" value="WBGene00003232"/>
</dbReference>
<dbReference type="GeneID" id="191707"/>
<dbReference type="KEGG" id="cel:CELE_ZC506.4"/>
<dbReference type="UCSC" id="ZC506.4b">
    <property type="organism name" value="c. elegans"/>
</dbReference>
<dbReference type="AGR" id="WB:WBGene00003232"/>
<dbReference type="CTD" id="191707"/>
<dbReference type="WormBase" id="ZC506.4a">
    <property type="protein sequence ID" value="CE50434"/>
    <property type="gene ID" value="WBGene00003232"/>
    <property type="gene designation" value="mgl-1"/>
</dbReference>
<dbReference type="eggNOG" id="KOG1056">
    <property type="taxonomic scope" value="Eukaryota"/>
</dbReference>
<dbReference type="GeneTree" id="ENSGT01030000234595"/>
<dbReference type="InParanoid" id="Q09630"/>
<dbReference type="OrthoDB" id="425344at2759"/>
<dbReference type="PhylomeDB" id="Q09630"/>
<dbReference type="Reactome" id="R-CEL-418594">
    <property type="pathway name" value="G alpha (i) signalling events"/>
</dbReference>
<dbReference type="Reactome" id="R-CEL-420499">
    <property type="pathway name" value="Class C/3 (Metabotropic glutamate/pheromone receptors)"/>
</dbReference>
<dbReference type="PRO" id="PR:Q09630"/>
<dbReference type="Proteomes" id="UP000001940">
    <property type="component" value="Chromosome X"/>
</dbReference>
<dbReference type="Bgee" id="WBGene00003232">
    <property type="expression patterns" value="Expressed in anatomical system and 4 other cell types or tissues"/>
</dbReference>
<dbReference type="ExpressionAtlas" id="Q09630">
    <property type="expression patterns" value="baseline and differential"/>
</dbReference>
<dbReference type="GO" id="GO:0005886">
    <property type="term" value="C:plasma membrane"/>
    <property type="evidence" value="ECO:0000318"/>
    <property type="project" value="GO_Central"/>
</dbReference>
<dbReference type="GO" id="GO:0001641">
    <property type="term" value="F:group II metabotropic glutamate receptor activity"/>
    <property type="evidence" value="ECO:0000318"/>
    <property type="project" value="GO_Central"/>
</dbReference>
<dbReference type="GO" id="GO:0007216">
    <property type="term" value="P:G protein-coupled glutamate receptor signaling pathway"/>
    <property type="evidence" value="ECO:0000318"/>
    <property type="project" value="GO_Central"/>
</dbReference>
<dbReference type="GO" id="GO:0010884">
    <property type="term" value="P:positive regulation of lipid storage"/>
    <property type="evidence" value="ECO:0000316"/>
    <property type="project" value="WormBase"/>
</dbReference>
<dbReference type="GO" id="GO:0051966">
    <property type="term" value="P:regulation of synaptic transmission, glutamatergic"/>
    <property type="evidence" value="ECO:0000318"/>
    <property type="project" value="GO_Central"/>
</dbReference>
<dbReference type="CDD" id="cd15934">
    <property type="entry name" value="7tmC_mGluRs_group2_3"/>
    <property type="match status" value="1"/>
</dbReference>
<dbReference type="CDD" id="cd06362">
    <property type="entry name" value="PBP1_mGluR"/>
    <property type="match status" value="1"/>
</dbReference>
<dbReference type="FunFam" id="2.10.50.30:FF:000001">
    <property type="entry name" value="metabotropic glutamate receptor 1"/>
    <property type="match status" value="1"/>
</dbReference>
<dbReference type="FunFam" id="3.40.50.2300:FF:000362">
    <property type="entry name" value="Probable metabotropic glutamate receptor mgl-1"/>
    <property type="match status" value="1"/>
</dbReference>
<dbReference type="Gene3D" id="3.40.50.2300">
    <property type="match status" value="2"/>
</dbReference>
<dbReference type="Gene3D" id="2.10.50.30">
    <property type="entry name" value="GPCR, family 3, nine cysteines domain"/>
    <property type="match status" value="1"/>
</dbReference>
<dbReference type="InterPro" id="IPR001828">
    <property type="entry name" value="ANF_lig-bd_rcpt"/>
</dbReference>
<dbReference type="InterPro" id="IPR000337">
    <property type="entry name" value="GPCR_3"/>
</dbReference>
<dbReference type="InterPro" id="IPR011500">
    <property type="entry name" value="GPCR_3_9-Cys_dom"/>
</dbReference>
<dbReference type="InterPro" id="IPR038550">
    <property type="entry name" value="GPCR_3_9-Cys_sf"/>
</dbReference>
<dbReference type="InterPro" id="IPR017978">
    <property type="entry name" value="GPCR_3_C"/>
</dbReference>
<dbReference type="InterPro" id="IPR017979">
    <property type="entry name" value="GPCR_3_CS"/>
</dbReference>
<dbReference type="InterPro" id="IPR000162">
    <property type="entry name" value="GPCR_3_mtglu_rcpt"/>
</dbReference>
<dbReference type="InterPro" id="IPR050726">
    <property type="entry name" value="mGluR"/>
</dbReference>
<dbReference type="InterPro" id="IPR028082">
    <property type="entry name" value="Peripla_BP_I"/>
</dbReference>
<dbReference type="PANTHER" id="PTHR24060">
    <property type="entry name" value="METABOTROPIC GLUTAMATE RECEPTOR"/>
    <property type="match status" value="1"/>
</dbReference>
<dbReference type="Pfam" id="PF00003">
    <property type="entry name" value="7tm_3"/>
    <property type="match status" value="1"/>
</dbReference>
<dbReference type="Pfam" id="PF01094">
    <property type="entry name" value="ANF_receptor"/>
    <property type="match status" value="1"/>
</dbReference>
<dbReference type="Pfam" id="PF07562">
    <property type="entry name" value="NCD3G"/>
    <property type="match status" value="1"/>
</dbReference>
<dbReference type="PRINTS" id="PR00248">
    <property type="entry name" value="GPCRMGR"/>
</dbReference>
<dbReference type="PRINTS" id="PR00593">
    <property type="entry name" value="MTABOTROPICR"/>
</dbReference>
<dbReference type="SUPFAM" id="SSF53822">
    <property type="entry name" value="Periplasmic binding protein-like I"/>
    <property type="match status" value="1"/>
</dbReference>
<dbReference type="PROSITE" id="PS00979">
    <property type="entry name" value="G_PROTEIN_RECEP_F3_1"/>
    <property type="match status" value="1"/>
</dbReference>
<dbReference type="PROSITE" id="PS00980">
    <property type="entry name" value="G_PROTEIN_RECEP_F3_2"/>
    <property type="match status" value="1"/>
</dbReference>
<dbReference type="PROSITE" id="PS00981">
    <property type="entry name" value="G_PROTEIN_RECEP_F3_3"/>
    <property type="match status" value="1"/>
</dbReference>
<dbReference type="PROSITE" id="PS50259">
    <property type="entry name" value="G_PROTEIN_RECEP_F3_4"/>
    <property type="match status" value="1"/>
</dbReference>